<evidence type="ECO:0000255" key="1">
    <source>
        <dbReference type="HAMAP-Rule" id="MF_00522"/>
    </source>
</evidence>
<gene>
    <name evidence="1" type="primary">psaJ</name>
</gene>
<keyword id="KW-0150">Chloroplast</keyword>
<keyword id="KW-0472">Membrane</keyword>
<keyword id="KW-0602">Photosynthesis</keyword>
<keyword id="KW-0603">Photosystem I</keyword>
<keyword id="KW-0934">Plastid</keyword>
<keyword id="KW-0793">Thylakoid</keyword>
<keyword id="KW-0812">Transmembrane</keyword>
<keyword id="KW-1133">Transmembrane helix</keyword>
<proteinExistence type="inferred from homology"/>
<feature type="chain" id="PRO_0000276083" description="Photosystem I reaction center subunit IX">
    <location>
        <begin position="1"/>
        <end position="42"/>
    </location>
</feature>
<feature type="transmembrane region" description="Helical" evidence="1">
    <location>
        <begin position="8"/>
        <end position="28"/>
    </location>
</feature>
<organism>
    <name type="scientific">Pyropia yezoensis</name>
    <name type="common">Susabi-nori</name>
    <name type="synonym">Porphyra yezoensis</name>
    <dbReference type="NCBI Taxonomy" id="2788"/>
    <lineage>
        <taxon>Eukaryota</taxon>
        <taxon>Rhodophyta</taxon>
        <taxon>Bangiophyceae</taxon>
        <taxon>Bangiales</taxon>
        <taxon>Bangiaceae</taxon>
        <taxon>Pyropia</taxon>
    </lineage>
</organism>
<comment type="function">
    <text evidence="1">May help in the organization of the PsaE and PsaF subunits.</text>
</comment>
<comment type="subcellular location">
    <subcellularLocation>
        <location evidence="1">Plastid</location>
        <location evidence="1">Chloroplast thylakoid membrane</location>
        <topology evidence="1">Single-pass membrane protein</topology>
    </subcellularLocation>
</comment>
<comment type="similarity">
    <text evidence="1">Belongs to the PsaJ family.</text>
</comment>
<reference key="1">
    <citation type="submission" date="2003-11" db="EMBL/GenBank/DDBJ databases">
        <title>Whole genome sequence of Porphyra yezoensis chloroplast.</title>
        <authorList>
            <person name="Kunimoto M."/>
            <person name="Morishima K."/>
            <person name="Yoshikawa M."/>
            <person name="Fukuda S."/>
            <person name="Kobayashi T."/>
            <person name="Kobayashi M."/>
            <person name="Okazaki T."/>
            <person name="Ohara I."/>
            <person name="Nakayama I."/>
        </authorList>
    </citation>
    <scope>NUCLEOTIDE SEQUENCE [LARGE SCALE GENOMIC DNA]</scope>
    <source>
        <strain>U-51</strain>
    </source>
</reference>
<name>PSAJ_PYRYE</name>
<sequence>MNNNFTKYLSTAPVIGVLWMTFTAGFIIELNRFFPDVLYFYL</sequence>
<dbReference type="EMBL" id="AP006715">
    <property type="protein sequence ID" value="BAE92318.1"/>
    <property type="molecule type" value="Genomic_DNA"/>
</dbReference>
<dbReference type="RefSeq" id="YP_536875.1">
    <property type="nucleotide sequence ID" value="NC_007932.1"/>
</dbReference>
<dbReference type="SMR" id="Q1XDU3"/>
<dbReference type="GeneID" id="3978953"/>
<dbReference type="GO" id="GO:0009535">
    <property type="term" value="C:chloroplast thylakoid membrane"/>
    <property type="evidence" value="ECO:0007669"/>
    <property type="project" value="UniProtKB-SubCell"/>
</dbReference>
<dbReference type="GO" id="GO:0009522">
    <property type="term" value="C:photosystem I"/>
    <property type="evidence" value="ECO:0007669"/>
    <property type="project" value="UniProtKB-KW"/>
</dbReference>
<dbReference type="GO" id="GO:0015979">
    <property type="term" value="P:photosynthesis"/>
    <property type="evidence" value="ECO:0007669"/>
    <property type="project" value="UniProtKB-UniRule"/>
</dbReference>
<dbReference type="Gene3D" id="1.20.5.510">
    <property type="entry name" value="Single helix bin"/>
    <property type="match status" value="1"/>
</dbReference>
<dbReference type="HAMAP" id="MF_00522">
    <property type="entry name" value="PSI_PsaJ"/>
    <property type="match status" value="1"/>
</dbReference>
<dbReference type="InterPro" id="IPR002615">
    <property type="entry name" value="PSI_PsaJ"/>
</dbReference>
<dbReference type="InterPro" id="IPR036062">
    <property type="entry name" value="PSI_PsaJ_sf"/>
</dbReference>
<dbReference type="PANTHER" id="PTHR36082">
    <property type="match status" value="1"/>
</dbReference>
<dbReference type="PANTHER" id="PTHR36082:SF2">
    <property type="entry name" value="PHOTOSYSTEM I REACTION CENTER SUBUNIT IX"/>
    <property type="match status" value="1"/>
</dbReference>
<dbReference type="Pfam" id="PF01701">
    <property type="entry name" value="PSI_PsaJ"/>
    <property type="match status" value="1"/>
</dbReference>
<dbReference type="SUPFAM" id="SSF81544">
    <property type="entry name" value="Subunit IX of photosystem I reaction centre, PsaJ"/>
    <property type="match status" value="1"/>
</dbReference>
<protein>
    <recommendedName>
        <fullName evidence="1">Photosystem I reaction center subunit IX</fullName>
    </recommendedName>
    <alternativeName>
        <fullName evidence="1">PSI-J</fullName>
    </alternativeName>
</protein>
<accession>Q1XDU3</accession>
<geneLocation type="chloroplast"/>